<reference key="1">
    <citation type="submission" date="2007-05" db="EMBL/GenBank/DDBJ databases">
        <title>Complete sequence of Geobacter uraniireducens Rf4.</title>
        <authorList>
            <consortium name="US DOE Joint Genome Institute"/>
            <person name="Copeland A."/>
            <person name="Lucas S."/>
            <person name="Lapidus A."/>
            <person name="Barry K."/>
            <person name="Detter J.C."/>
            <person name="Glavina del Rio T."/>
            <person name="Hammon N."/>
            <person name="Israni S."/>
            <person name="Dalin E."/>
            <person name="Tice H."/>
            <person name="Pitluck S."/>
            <person name="Chertkov O."/>
            <person name="Brettin T."/>
            <person name="Bruce D."/>
            <person name="Han C."/>
            <person name="Schmutz J."/>
            <person name="Larimer F."/>
            <person name="Land M."/>
            <person name="Hauser L."/>
            <person name="Kyrpides N."/>
            <person name="Mikhailova N."/>
            <person name="Shelobolina E."/>
            <person name="Aklujkar M."/>
            <person name="Lovley D."/>
            <person name="Richardson P."/>
        </authorList>
    </citation>
    <scope>NUCLEOTIDE SEQUENCE [LARGE SCALE GENOMIC DNA]</scope>
    <source>
        <strain>ATCC BAA-1134 / JCM 13001 / Rf4</strain>
    </source>
</reference>
<keyword id="KW-0066">ATP synthesis</keyword>
<keyword id="KW-0375">Hydrogen ion transport</keyword>
<keyword id="KW-0406">Ion transport</keyword>
<keyword id="KW-1185">Reference proteome</keyword>
<keyword id="KW-0813">Transport</keyword>
<evidence type="ECO:0000255" key="1">
    <source>
        <dbReference type="HAMAP-Rule" id="MF_00311"/>
    </source>
</evidence>
<feature type="chain" id="PRO_1000079069" description="V-type ATP synthase subunit E">
    <location>
        <begin position="1"/>
        <end position="187"/>
    </location>
</feature>
<sequence>MGYVELIAALRRDGEEQLEKIRSDAEREAERVKGDASARIERLRAEYAERLASLEAAQARAILADAESKASSIRLATESALAVRLFLLARSSLHHLRDEGYEQLFADLVRELPPGEWRRVVVNPADMALAARHFPNAEIVSHPAIVGGLEVSEEGGSISVVNTLEKRMERAWPELLPEILRDIYREL</sequence>
<proteinExistence type="inferred from homology"/>
<gene>
    <name evidence="1" type="primary">atpE</name>
    <name type="ordered locus">Gura_0420</name>
</gene>
<comment type="function">
    <text evidence="1">Produces ATP from ADP in the presence of a proton gradient across the membrane.</text>
</comment>
<comment type="similarity">
    <text evidence="1">Belongs to the V-ATPase E subunit family.</text>
</comment>
<accession>A5GCQ9</accession>
<protein>
    <recommendedName>
        <fullName>V-type ATP synthase subunit E</fullName>
    </recommendedName>
    <alternativeName>
        <fullName evidence="1">V-ATPase subunit E</fullName>
    </alternativeName>
</protein>
<organism>
    <name type="scientific">Geotalea uraniireducens (strain Rf4)</name>
    <name type="common">Geobacter uraniireducens</name>
    <dbReference type="NCBI Taxonomy" id="351605"/>
    <lineage>
        <taxon>Bacteria</taxon>
        <taxon>Pseudomonadati</taxon>
        <taxon>Thermodesulfobacteriota</taxon>
        <taxon>Desulfuromonadia</taxon>
        <taxon>Geobacterales</taxon>
        <taxon>Geobacteraceae</taxon>
        <taxon>Geotalea</taxon>
    </lineage>
</organism>
<dbReference type="EMBL" id="CP000698">
    <property type="protein sequence ID" value="ABQ24636.1"/>
    <property type="molecule type" value="Genomic_DNA"/>
</dbReference>
<dbReference type="RefSeq" id="WP_011937362.1">
    <property type="nucleotide sequence ID" value="NC_009483.1"/>
</dbReference>
<dbReference type="SMR" id="A5GCQ9"/>
<dbReference type="STRING" id="351605.Gura_0420"/>
<dbReference type="KEGG" id="gur:Gura_0420"/>
<dbReference type="HOGENOM" id="CLU_1445759_0_0_7"/>
<dbReference type="OrthoDB" id="5396335at2"/>
<dbReference type="Proteomes" id="UP000006695">
    <property type="component" value="Chromosome"/>
</dbReference>
<dbReference type="GO" id="GO:0033178">
    <property type="term" value="C:proton-transporting two-sector ATPase complex, catalytic domain"/>
    <property type="evidence" value="ECO:0007669"/>
    <property type="project" value="InterPro"/>
</dbReference>
<dbReference type="GO" id="GO:0005524">
    <property type="term" value="F:ATP binding"/>
    <property type="evidence" value="ECO:0007669"/>
    <property type="project" value="UniProtKB-UniRule"/>
</dbReference>
<dbReference type="GO" id="GO:0046933">
    <property type="term" value="F:proton-transporting ATP synthase activity, rotational mechanism"/>
    <property type="evidence" value="ECO:0007669"/>
    <property type="project" value="UniProtKB-UniRule"/>
</dbReference>
<dbReference type="GO" id="GO:0046961">
    <property type="term" value="F:proton-transporting ATPase activity, rotational mechanism"/>
    <property type="evidence" value="ECO:0007669"/>
    <property type="project" value="InterPro"/>
</dbReference>
<dbReference type="GO" id="GO:0042777">
    <property type="term" value="P:proton motive force-driven plasma membrane ATP synthesis"/>
    <property type="evidence" value="ECO:0007669"/>
    <property type="project" value="UniProtKB-UniRule"/>
</dbReference>
<dbReference type="Gene3D" id="3.30.2320.30">
    <property type="entry name" value="ATP synthase, E subunit, C-terminal"/>
    <property type="match status" value="1"/>
</dbReference>
<dbReference type="HAMAP" id="MF_00311">
    <property type="entry name" value="ATP_synth_E_arch"/>
    <property type="match status" value="1"/>
</dbReference>
<dbReference type="InterPro" id="IPR038495">
    <property type="entry name" value="ATPase_E_C"/>
</dbReference>
<dbReference type="InterPro" id="IPR002842">
    <property type="entry name" value="ATPase_V1_Esu"/>
</dbReference>
<dbReference type="Pfam" id="PF01991">
    <property type="entry name" value="vATP-synt_E"/>
    <property type="match status" value="1"/>
</dbReference>
<dbReference type="SUPFAM" id="SSF160527">
    <property type="entry name" value="V-type ATPase subunit E-like"/>
    <property type="match status" value="1"/>
</dbReference>
<name>VATE_GEOUR</name>